<name>RHAA_ECO27</name>
<sequence length="419" mass="47296">MTTQLEQAWELAKQRFAAVGIDVEEALRQLDRLPVSMHCWQGDDVSGFENPEGSLTGGIQATGNYPGKARNASELRADLEQAMRLIPGPKRLNLHAIYLESDTPVSRDQITPEHFKNWVEWAKANQLGLDFNPSCFSHPLSADGFTLSHADDRIRQFWIDHCKASRRVSAYFGEQLGTPSVMNIWIPDGMKDITVDRLAPRQRLLAALDEVISEKLNPAHHIDAVESKLFGIGAESYTVGSNEFYLGYATSRQTALCLDAGHFHPTEVISDKISAAMLYVPQLLLHVSRPVRWDSDHVVLLDDETQAIASEIVRHDLFDRVHIGLDFFDASINRIAAWVIGTRNMKKALLRALLEPTAELRKLESAGDYTARLALLEEQKSLPWQAVWEMYCQRHDTPAGSEWLENVRTYEKEILSRRG</sequence>
<evidence type="ECO:0000255" key="1">
    <source>
        <dbReference type="HAMAP-Rule" id="MF_00541"/>
    </source>
</evidence>
<accession>B7UNM4</accession>
<feature type="chain" id="PRO_1000146580" description="L-rhamnose isomerase">
    <location>
        <begin position="1"/>
        <end position="419"/>
    </location>
</feature>
<feature type="binding site" evidence="1">
    <location>
        <position position="262"/>
    </location>
    <ligand>
        <name>Mn(2+)</name>
        <dbReference type="ChEBI" id="CHEBI:29035"/>
    </ligand>
</feature>
<feature type="binding site" evidence="1">
    <location>
        <position position="294"/>
    </location>
    <ligand>
        <name>Mn(2+)</name>
        <dbReference type="ChEBI" id="CHEBI:29035"/>
    </ligand>
</feature>
<feature type="binding site" evidence="1">
    <location>
        <position position="296"/>
    </location>
    <ligand>
        <name>Mn(2+)</name>
        <dbReference type="ChEBI" id="CHEBI:29035"/>
    </ligand>
</feature>
<reference key="1">
    <citation type="journal article" date="2009" name="J. Bacteriol.">
        <title>Complete genome sequence and comparative genome analysis of enteropathogenic Escherichia coli O127:H6 strain E2348/69.</title>
        <authorList>
            <person name="Iguchi A."/>
            <person name="Thomson N.R."/>
            <person name="Ogura Y."/>
            <person name="Saunders D."/>
            <person name="Ooka T."/>
            <person name="Henderson I.R."/>
            <person name="Harris D."/>
            <person name="Asadulghani M."/>
            <person name="Kurokawa K."/>
            <person name="Dean P."/>
            <person name="Kenny B."/>
            <person name="Quail M.A."/>
            <person name="Thurston S."/>
            <person name="Dougan G."/>
            <person name="Hayashi T."/>
            <person name="Parkhill J."/>
            <person name="Frankel G."/>
        </authorList>
    </citation>
    <scope>NUCLEOTIDE SEQUENCE [LARGE SCALE GENOMIC DNA]</scope>
    <source>
        <strain>E2348/69 / EPEC</strain>
    </source>
</reference>
<keyword id="KW-0963">Cytoplasm</keyword>
<keyword id="KW-0413">Isomerase</keyword>
<keyword id="KW-0464">Manganese</keyword>
<keyword id="KW-0479">Metal-binding</keyword>
<keyword id="KW-1185">Reference proteome</keyword>
<keyword id="KW-0684">Rhamnose metabolism</keyword>
<gene>
    <name evidence="1" type="primary">rhaA</name>
    <name type="ordered locus">E2348C_4208</name>
</gene>
<comment type="function">
    <text evidence="1">Catalyzes the interconversion of L-rhamnose and L-rhamnulose.</text>
</comment>
<comment type="catalytic activity">
    <reaction evidence="1">
        <text>L-rhamnopyranose = L-rhamnulose</text>
        <dbReference type="Rhea" id="RHEA:23160"/>
        <dbReference type="ChEBI" id="CHEBI:17897"/>
        <dbReference type="ChEBI" id="CHEBI:62346"/>
        <dbReference type="EC" id="5.3.1.14"/>
    </reaction>
</comment>
<comment type="cofactor">
    <cofactor evidence="1">
        <name>Mn(2+)</name>
        <dbReference type="ChEBI" id="CHEBI:29035"/>
    </cofactor>
    <text evidence="1">Binds 1 Mn(2+) ion per subunit.</text>
</comment>
<comment type="pathway">
    <text evidence="1">Carbohydrate degradation; L-rhamnose degradation; glycerone phosphate from L-rhamnose: step 1/3.</text>
</comment>
<comment type="subunit">
    <text evidence="1">Homotetramer.</text>
</comment>
<comment type="subcellular location">
    <subcellularLocation>
        <location evidence="1">Cytoplasm</location>
    </subcellularLocation>
</comment>
<comment type="similarity">
    <text evidence="1">Belongs to the rhamnose isomerase family.</text>
</comment>
<protein>
    <recommendedName>
        <fullName evidence="1">L-rhamnose isomerase</fullName>
        <ecNumber evidence="1">5.3.1.14</ecNumber>
    </recommendedName>
</protein>
<organism>
    <name type="scientific">Escherichia coli O127:H6 (strain E2348/69 / EPEC)</name>
    <dbReference type="NCBI Taxonomy" id="574521"/>
    <lineage>
        <taxon>Bacteria</taxon>
        <taxon>Pseudomonadati</taxon>
        <taxon>Pseudomonadota</taxon>
        <taxon>Gammaproteobacteria</taxon>
        <taxon>Enterobacterales</taxon>
        <taxon>Enterobacteriaceae</taxon>
        <taxon>Escherichia</taxon>
    </lineage>
</organism>
<proteinExistence type="inferred from homology"/>
<dbReference type="EC" id="5.3.1.14" evidence="1"/>
<dbReference type="EMBL" id="FM180568">
    <property type="protein sequence ID" value="CAS11756.1"/>
    <property type="molecule type" value="Genomic_DNA"/>
</dbReference>
<dbReference type="RefSeq" id="WP_001409619.1">
    <property type="nucleotide sequence ID" value="NC_011601.1"/>
</dbReference>
<dbReference type="SMR" id="B7UNM4"/>
<dbReference type="KEGG" id="ecg:E2348C_4208"/>
<dbReference type="HOGENOM" id="CLU_052790_0_0_6"/>
<dbReference type="UniPathway" id="UPA00541">
    <property type="reaction ID" value="UER00601"/>
</dbReference>
<dbReference type="Proteomes" id="UP000008205">
    <property type="component" value="Chromosome"/>
</dbReference>
<dbReference type="GO" id="GO:0005737">
    <property type="term" value="C:cytoplasm"/>
    <property type="evidence" value="ECO:0007669"/>
    <property type="project" value="UniProtKB-SubCell"/>
</dbReference>
<dbReference type="GO" id="GO:0008740">
    <property type="term" value="F:L-rhamnose isomerase activity"/>
    <property type="evidence" value="ECO:0007669"/>
    <property type="project" value="UniProtKB-UniRule"/>
</dbReference>
<dbReference type="GO" id="GO:0030145">
    <property type="term" value="F:manganese ion binding"/>
    <property type="evidence" value="ECO:0007669"/>
    <property type="project" value="UniProtKB-UniRule"/>
</dbReference>
<dbReference type="GO" id="GO:0019324">
    <property type="term" value="P:L-lyxose metabolic process"/>
    <property type="evidence" value="ECO:0007669"/>
    <property type="project" value="TreeGrafter"/>
</dbReference>
<dbReference type="GO" id="GO:0019301">
    <property type="term" value="P:rhamnose catabolic process"/>
    <property type="evidence" value="ECO:0007669"/>
    <property type="project" value="UniProtKB-UniRule"/>
</dbReference>
<dbReference type="FunFam" id="3.20.20.150:FF:000006">
    <property type="entry name" value="L-rhamnose isomerase"/>
    <property type="match status" value="1"/>
</dbReference>
<dbReference type="Gene3D" id="3.20.20.150">
    <property type="entry name" value="Divalent-metal-dependent TIM barrel enzymes"/>
    <property type="match status" value="1"/>
</dbReference>
<dbReference type="HAMAP" id="MF_00541">
    <property type="entry name" value="RhaA"/>
    <property type="match status" value="1"/>
</dbReference>
<dbReference type="InterPro" id="IPR050337">
    <property type="entry name" value="L-rhamnose_isomerase"/>
</dbReference>
<dbReference type="InterPro" id="IPR009308">
    <property type="entry name" value="Rhamnose_isomerase"/>
</dbReference>
<dbReference type="InterPro" id="IPR036237">
    <property type="entry name" value="Xyl_isomerase-like_sf"/>
</dbReference>
<dbReference type="NCBIfam" id="NF002203">
    <property type="entry name" value="PRK01076.1"/>
    <property type="match status" value="1"/>
</dbReference>
<dbReference type="NCBIfam" id="TIGR01748">
    <property type="entry name" value="rhaA"/>
    <property type="match status" value="1"/>
</dbReference>
<dbReference type="PANTHER" id="PTHR30268">
    <property type="entry name" value="L-RHAMNOSE ISOMERASE"/>
    <property type="match status" value="1"/>
</dbReference>
<dbReference type="PANTHER" id="PTHR30268:SF0">
    <property type="entry name" value="L-RHAMNOSE ISOMERASE"/>
    <property type="match status" value="1"/>
</dbReference>
<dbReference type="Pfam" id="PF06134">
    <property type="entry name" value="RhaA"/>
    <property type="match status" value="1"/>
</dbReference>
<dbReference type="SUPFAM" id="SSF51658">
    <property type="entry name" value="Xylose isomerase-like"/>
    <property type="match status" value="1"/>
</dbReference>